<dbReference type="EC" id="3.1.3.11" evidence="1"/>
<dbReference type="EMBL" id="CP000886">
    <property type="protein sequence ID" value="ABX70825.1"/>
    <property type="molecule type" value="Genomic_DNA"/>
</dbReference>
<dbReference type="RefSeq" id="WP_000853764.1">
    <property type="nucleotide sequence ID" value="NC_010102.1"/>
</dbReference>
<dbReference type="SMR" id="A9N548"/>
<dbReference type="KEGG" id="spq:SPAB_05556"/>
<dbReference type="PATRIC" id="fig|1016998.12.peg.5209"/>
<dbReference type="HOGENOM" id="CLU_039977_2_2_6"/>
<dbReference type="BioCyc" id="SENT1016998:SPAB_RS22695-MONOMER"/>
<dbReference type="UniPathway" id="UPA00138"/>
<dbReference type="Proteomes" id="UP000008556">
    <property type="component" value="Chromosome"/>
</dbReference>
<dbReference type="GO" id="GO:0005829">
    <property type="term" value="C:cytosol"/>
    <property type="evidence" value="ECO:0007669"/>
    <property type="project" value="TreeGrafter"/>
</dbReference>
<dbReference type="GO" id="GO:0042132">
    <property type="term" value="F:fructose 1,6-bisphosphate 1-phosphatase activity"/>
    <property type="evidence" value="ECO:0007669"/>
    <property type="project" value="UniProtKB-UniRule"/>
</dbReference>
<dbReference type="GO" id="GO:0000287">
    <property type="term" value="F:magnesium ion binding"/>
    <property type="evidence" value="ECO:0007669"/>
    <property type="project" value="UniProtKB-UniRule"/>
</dbReference>
<dbReference type="GO" id="GO:0030388">
    <property type="term" value="P:fructose 1,6-bisphosphate metabolic process"/>
    <property type="evidence" value="ECO:0007669"/>
    <property type="project" value="TreeGrafter"/>
</dbReference>
<dbReference type="GO" id="GO:0006002">
    <property type="term" value="P:fructose 6-phosphate metabolic process"/>
    <property type="evidence" value="ECO:0007669"/>
    <property type="project" value="TreeGrafter"/>
</dbReference>
<dbReference type="GO" id="GO:0006000">
    <property type="term" value="P:fructose metabolic process"/>
    <property type="evidence" value="ECO:0007669"/>
    <property type="project" value="TreeGrafter"/>
</dbReference>
<dbReference type="GO" id="GO:0006094">
    <property type="term" value="P:gluconeogenesis"/>
    <property type="evidence" value="ECO:0007669"/>
    <property type="project" value="UniProtKB-UniRule"/>
</dbReference>
<dbReference type="GO" id="GO:0005986">
    <property type="term" value="P:sucrose biosynthetic process"/>
    <property type="evidence" value="ECO:0007669"/>
    <property type="project" value="TreeGrafter"/>
</dbReference>
<dbReference type="CDD" id="cd00354">
    <property type="entry name" value="FBPase"/>
    <property type="match status" value="1"/>
</dbReference>
<dbReference type="FunFam" id="3.30.540.10:FF:000002">
    <property type="entry name" value="Fructose-1,6-bisphosphatase class 1"/>
    <property type="match status" value="1"/>
</dbReference>
<dbReference type="FunFam" id="3.40.190.80:FF:000001">
    <property type="entry name" value="Fructose-1,6-bisphosphatase class 1"/>
    <property type="match status" value="1"/>
</dbReference>
<dbReference type="Gene3D" id="3.40.190.80">
    <property type="match status" value="1"/>
</dbReference>
<dbReference type="Gene3D" id="3.30.540.10">
    <property type="entry name" value="Fructose-1,6-Bisphosphatase, subunit A, domain 1"/>
    <property type="match status" value="1"/>
</dbReference>
<dbReference type="HAMAP" id="MF_01855">
    <property type="entry name" value="FBPase_class1"/>
    <property type="match status" value="1"/>
</dbReference>
<dbReference type="InterPro" id="IPR044015">
    <property type="entry name" value="FBPase_C_dom"/>
</dbReference>
<dbReference type="InterPro" id="IPR000146">
    <property type="entry name" value="FBPase_class-1"/>
</dbReference>
<dbReference type="InterPro" id="IPR033391">
    <property type="entry name" value="FBPase_N"/>
</dbReference>
<dbReference type="InterPro" id="IPR028343">
    <property type="entry name" value="FBPtase"/>
</dbReference>
<dbReference type="InterPro" id="IPR020548">
    <property type="entry name" value="Fructose_bisphosphatase_AS"/>
</dbReference>
<dbReference type="NCBIfam" id="NF006778">
    <property type="entry name" value="PRK09293.1-1"/>
    <property type="match status" value="1"/>
</dbReference>
<dbReference type="NCBIfam" id="NF006779">
    <property type="entry name" value="PRK09293.1-3"/>
    <property type="match status" value="1"/>
</dbReference>
<dbReference type="PANTHER" id="PTHR11556">
    <property type="entry name" value="FRUCTOSE-1,6-BISPHOSPHATASE-RELATED"/>
    <property type="match status" value="1"/>
</dbReference>
<dbReference type="PANTHER" id="PTHR11556:SF35">
    <property type="entry name" value="SEDOHEPTULOSE-1,7-BISPHOSPHATASE, CHLOROPLASTIC"/>
    <property type="match status" value="1"/>
</dbReference>
<dbReference type="Pfam" id="PF00316">
    <property type="entry name" value="FBPase"/>
    <property type="match status" value="1"/>
</dbReference>
<dbReference type="Pfam" id="PF18913">
    <property type="entry name" value="FBPase_C"/>
    <property type="match status" value="1"/>
</dbReference>
<dbReference type="PIRSF" id="PIRSF500210">
    <property type="entry name" value="FBPtase"/>
    <property type="match status" value="1"/>
</dbReference>
<dbReference type="PIRSF" id="PIRSF000904">
    <property type="entry name" value="FBPtase_SBPase"/>
    <property type="match status" value="1"/>
</dbReference>
<dbReference type="PRINTS" id="PR00115">
    <property type="entry name" value="F16BPHPHTASE"/>
</dbReference>
<dbReference type="SUPFAM" id="SSF56655">
    <property type="entry name" value="Carbohydrate phosphatase"/>
    <property type="match status" value="1"/>
</dbReference>
<dbReference type="PROSITE" id="PS00124">
    <property type="entry name" value="FBPASE"/>
    <property type="match status" value="1"/>
</dbReference>
<keyword id="KW-0119">Carbohydrate metabolism</keyword>
<keyword id="KW-0963">Cytoplasm</keyword>
<keyword id="KW-0378">Hydrolase</keyword>
<keyword id="KW-0460">Magnesium</keyword>
<keyword id="KW-0479">Metal-binding</keyword>
<proteinExistence type="inferred from homology"/>
<organism>
    <name type="scientific">Salmonella paratyphi B (strain ATCC BAA-1250 / SPB7)</name>
    <dbReference type="NCBI Taxonomy" id="1016998"/>
    <lineage>
        <taxon>Bacteria</taxon>
        <taxon>Pseudomonadati</taxon>
        <taxon>Pseudomonadota</taxon>
        <taxon>Gammaproteobacteria</taxon>
        <taxon>Enterobacterales</taxon>
        <taxon>Enterobacteriaceae</taxon>
        <taxon>Salmonella</taxon>
    </lineage>
</organism>
<evidence type="ECO:0000255" key="1">
    <source>
        <dbReference type="HAMAP-Rule" id="MF_01855"/>
    </source>
</evidence>
<gene>
    <name evidence="1" type="primary">fbp</name>
    <name type="ordered locus">SPAB_05556</name>
</gene>
<reference key="1">
    <citation type="submission" date="2007-11" db="EMBL/GenBank/DDBJ databases">
        <authorList>
            <consortium name="The Salmonella enterica serovar Paratyphi B Genome Sequencing Project"/>
            <person name="McClelland M."/>
            <person name="Sanderson E.K."/>
            <person name="Porwollik S."/>
            <person name="Spieth J."/>
            <person name="Clifton W.S."/>
            <person name="Fulton R."/>
            <person name="Cordes M."/>
            <person name="Wollam A."/>
            <person name="Shah N."/>
            <person name="Pepin K."/>
            <person name="Bhonagiri V."/>
            <person name="Nash W."/>
            <person name="Johnson M."/>
            <person name="Thiruvilangam P."/>
            <person name="Wilson R."/>
        </authorList>
    </citation>
    <scope>NUCLEOTIDE SEQUENCE [LARGE SCALE GENOMIC DNA]</scope>
    <source>
        <strain>ATCC BAA-1250 / SPB7</strain>
    </source>
</reference>
<name>F16PA_SALPB</name>
<comment type="catalytic activity">
    <reaction evidence="1">
        <text>beta-D-fructose 1,6-bisphosphate + H2O = beta-D-fructose 6-phosphate + phosphate</text>
        <dbReference type="Rhea" id="RHEA:11064"/>
        <dbReference type="ChEBI" id="CHEBI:15377"/>
        <dbReference type="ChEBI" id="CHEBI:32966"/>
        <dbReference type="ChEBI" id="CHEBI:43474"/>
        <dbReference type="ChEBI" id="CHEBI:57634"/>
        <dbReference type="EC" id="3.1.3.11"/>
    </reaction>
</comment>
<comment type="cofactor">
    <cofactor evidence="1">
        <name>Mg(2+)</name>
        <dbReference type="ChEBI" id="CHEBI:18420"/>
    </cofactor>
    <text evidence="1">Binds 2 magnesium ions per subunit.</text>
</comment>
<comment type="pathway">
    <text evidence="1">Carbohydrate biosynthesis; gluconeogenesis.</text>
</comment>
<comment type="subunit">
    <text evidence="1">Homotetramer.</text>
</comment>
<comment type="subcellular location">
    <subcellularLocation>
        <location evidence="1">Cytoplasm</location>
    </subcellularLocation>
</comment>
<comment type="similarity">
    <text evidence="1">Belongs to the FBPase class 1 family.</text>
</comment>
<protein>
    <recommendedName>
        <fullName evidence="1">Fructose-1,6-bisphosphatase class 1</fullName>
        <shortName evidence="1">FBPase class 1</shortName>
        <ecNumber evidence="1">3.1.3.11</ecNumber>
    </recommendedName>
    <alternativeName>
        <fullName evidence="1">D-fructose-1,6-bisphosphate 1-phosphohydrolase class 1</fullName>
    </alternativeName>
</protein>
<accession>A9N548</accession>
<sequence>MKTLGEFIVEKQHEFSQATGELTALLSAIKLGAKIIHRDINKAGLVDILGASGAENVQGEVQQKLDLFANEKLKAALKARDIVAGIASEEEDEIVVFEGCEHAKYVVLMDPLDGSSNIDVNVSVGTIFSIYRRVTPVGTPVTEEDFLQPGNKQVAAGYVVYGSSTMLVYTTGCGVHAFTYDPSLGVFCLCQERMRFPEKGKTYSINEGNYIKFPNGVKKYIKFCQEEDSSTSRPYTSRYIGSLVADFHRNLLKGGIYLYPSTASHPQGKLRLLYECNPMAFLAEQAGGKASDGKERILDIIPESLHQRRSFFVGNRHMVDDVERFIREYPDA</sequence>
<feature type="chain" id="PRO_0000364694" description="Fructose-1,6-bisphosphatase class 1">
    <location>
        <begin position="1"/>
        <end position="332"/>
    </location>
</feature>
<feature type="binding site" evidence="1">
    <location>
        <position position="89"/>
    </location>
    <ligand>
        <name>Mg(2+)</name>
        <dbReference type="ChEBI" id="CHEBI:18420"/>
        <label>1</label>
    </ligand>
</feature>
<feature type="binding site" evidence="1">
    <location>
        <position position="110"/>
    </location>
    <ligand>
        <name>Mg(2+)</name>
        <dbReference type="ChEBI" id="CHEBI:18420"/>
        <label>1</label>
    </ligand>
</feature>
<feature type="binding site" evidence="1">
    <location>
        <position position="110"/>
    </location>
    <ligand>
        <name>Mg(2+)</name>
        <dbReference type="ChEBI" id="CHEBI:18420"/>
        <label>2</label>
    </ligand>
</feature>
<feature type="binding site" evidence="1">
    <location>
        <position position="112"/>
    </location>
    <ligand>
        <name>Mg(2+)</name>
        <dbReference type="ChEBI" id="CHEBI:18420"/>
        <label>1</label>
    </ligand>
</feature>
<feature type="binding site" evidence="1">
    <location>
        <begin position="113"/>
        <end position="116"/>
    </location>
    <ligand>
        <name>substrate</name>
    </ligand>
</feature>
<feature type="binding site" evidence="1">
    <location>
        <position position="113"/>
    </location>
    <ligand>
        <name>Mg(2+)</name>
        <dbReference type="ChEBI" id="CHEBI:18420"/>
        <label>2</label>
    </ligand>
</feature>
<feature type="binding site" evidence="1">
    <location>
        <position position="206"/>
    </location>
    <ligand>
        <name>substrate</name>
    </ligand>
</feature>
<feature type="binding site" evidence="1">
    <location>
        <position position="239"/>
    </location>
    <ligand>
        <name>substrate</name>
    </ligand>
</feature>
<feature type="binding site" evidence="1">
    <location>
        <begin position="257"/>
        <end position="259"/>
    </location>
    <ligand>
        <name>substrate</name>
    </ligand>
</feature>
<feature type="binding site" evidence="1">
    <location>
        <position position="269"/>
    </location>
    <ligand>
        <name>substrate</name>
    </ligand>
</feature>
<feature type="binding site" evidence="1">
    <location>
        <position position="275"/>
    </location>
    <ligand>
        <name>Mg(2+)</name>
        <dbReference type="ChEBI" id="CHEBI:18420"/>
        <label>2</label>
    </ligand>
</feature>